<gene>
    <name evidence="1" type="primary">proB</name>
    <name type="ordered locus">BP0746</name>
</gene>
<evidence type="ECO:0000255" key="1">
    <source>
        <dbReference type="HAMAP-Rule" id="MF_00456"/>
    </source>
</evidence>
<evidence type="ECO:0000305" key="2"/>
<feature type="chain" id="PRO_0000109649" description="Glutamate 5-kinase">
    <location>
        <begin position="1"/>
        <end position="378"/>
    </location>
</feature>
<feature type="domain" description="PUA" evidence="1">
    <location>
        <begin position="286"/>
        <end position="364"/>
    </location>
</feature>
<feature type="binding site" evidence="1">
    <location>
        <position position="20"/>
    </location>
    <ligand>
        <name>ATP</name>
        <dbReference type="ChEBI" id="CHEBI:30616"/>
    </ligand>
</feature>
<feature type="binding site" evidence="1">
    <location>
        <position position="60"/>
    </location>
    <ligand>
        <name>substrate</name>
    </ligand>
</feature>
<feature type="binding site" evidence="1">
    <location>
        <position position="147"/>
    </location>
    <ligand>
        <name>substrate</name>
    </ligand>
</feature>
<feature type="binding site" evidence="1">
    <location>
        <position position="159"/>
    </location>
    <ligand>
        <name>substrate</name>
    </ligand>
</feature>
<feature type="binding site" evidence="1">
    <location>
        <begin position="179"/>
        <end position="180"/>
    </location>
    <ligand>
        <name>ATP</name>
        <dbReference type="ChEBI" id="CHEBI:30616"/>
    </ligand>
</feature>
<feature type="binding site" evidence="1">
    <location>
        <begin position="221"/>
        <end position="227"/>
    </location>
    <ligand>
        <name>ATP</name>
        <dbReference type="ChEBI" id="CHEBI:30616"/>
    </ligand>
</feature>
<keyword id="KW-0028">Amino-acid biosynthesis</keyword>
<keyword id="KW-0067">ATP-binding</keyword>
<keyword id="KW-0963">Cytoplasm</keyword>
<keyword id="KW-0418">Kinase</keyword>
<keyword id="KW-0547">Nucleotide-binding</keyword>
<keyword id="KW-0641">Proline biosynthesis</keyword>
<keyword id="KW-1185">Reference proteome</keyword>
<keyword id="KW-0808">Transferase</keyword>
<organism>
    <name type="scientific">Bordetella pertussis (strain Tohama I / ATCC BAA-589 / NCTC 13251)</name>
    <dbReference type="NCBI Taxonomy" id="257313"/>
    <lineage>
        <taxon>Bacteria</taxon>
        <taxon>Pseudomonadati</taxon>
        <taxon>Pseudomonadota</taxon>
        <taxon>Betaproteobacteria</taxon>
        <taxon>Burkholderiales</taxon>
        <taxon>Alcaligenaceae</taxon>
        <taxon>Bordetella</taxon>
    </lineage>
</organism>
<protein>
    <recommendedName>
        <fullName evidence="1">Glutamate 5-kinase</fullName>
        <ecNumber evidence="1">2.7.2.11</ecNumber>
    </recommendedName>
    <alternativeName>
        <fullName evidence="1">Gamma-glutamyl kinase</fullName>
        <shortName evidence="1">GK</shortName>
    </alternativeName>
</protein>
<name>PROB_BORPE</name>
<proteinExistence type="inferred from homology"/>
<comment type="function">
    <text evidence="1">Catalyzes the transfer of a phosphate group to glutamate to form L-glutamate 5-phosphate.</text>
</comment>
<comment type="catalytic activity">
    <reaction evidence="1">
        <text>L-glutamate + ATP = L-glutamyl 5-phosphate + ADP</text>
        <dbReference type="Rhea" id="RHEA:14877"/>
        <dbReference type="ChEBI" id="CHEBI:29985"/>
        <dbReference type="ChEBI" id="CHEBI:30616"/>
        <dbReference type="ChEBI" id="CHEBI:58274"/>
        <dbReference type="ChEBI" id="CHEBI:456216"/>
        <dbReference type="EC" id="2.7.2.11"/>
    </reaction>
</comment>
<comment type="pathway">
    <text evidence="1">Amino-acid biosynthesis; L-proline biosynthesis; L-glutamate 5-semialdehyde from L-glutamate: step 1/2.</text>
</comment>
<comment type="subcellular location">
    <subcellularLocation>
        <location evidence="1">Cytoplasm</location>
    </subcellularLocation>
</comment>
<comment type="similarity">
    <text evidence="1">Belongs to the glutamate 5-kinase family.</text>
</comment>
<comment type="sequence caution" evidence="2">
    <conflict type="erroneous initiation">
        <sequence resource="EMBL-CDS" id="CAE41052"/>
    </conflict>
</comment>
<sequence length="378" mass="40292">MTAQTSAVSVISAANRLVAKVGSSLVTNEGRGLDRAAVGHWAAQIAALHQQGKQVVLVSSGAIAEGMARLGWRKRPSAMHELQAAAAVGQMGLCQAYEAAFAEFGLRTAQILLTHEDLADRHRYLNARSTLFALLRLGVVPIVNENDTVVTDEIRFGDNDTLGALVTNLIEADALIILTDQRGLYEADPRRDPAARFVAHAQAGDAALEAMAGGAGSGVGTGGMLTKILAAKRAAHSGAHTVIASGRERNVLTRLAQGECIGTELRAVLPVWSARKQWLADHLRLRGRVVLDDGAVHALLHEGKSLLPIGVAEVQGEFERGDVVACVDMHGRECARGLINYSSADTRRILRQPSSQIARILGSMTDPELMHRDNLVVT</sequence>
<reference key="1">
    <citation type="journal article" date="2003" name="Nat. Genet.">
        <title>Comparative analysis of the genome sequences of Bordetella pertussis, Bordetella parapertussis and Bordetella bronchiseptica.</title>
        <authorList>
            <person name="Parkhill J."/>
            <person name="Sebaihia M."/>
            <person name="Preston A."/>
            <person name="Murphy L.D."/>
            <person name="Thomson N.R."/>
            <person name="Harris D.E."/>
            <person name="Holden M.T.G."/>
            <person name="Churcher C.M."/>
            <person name="Bentley S.D."/>
            <person name="Mungall K.L."/>
            <person name="Cerdeno-Tarraga A.-M."/>
            <person name="Temple L."/>
            <person name="James K.D."/>
            <person name="Harris B."/>
            <person name="Quail M.A."/>
            <person name="Achtman M."/>
            <person name="Atkin R."/>
            <person name="Baker S."/>
            <person name="Basham D."/>
            <person name="Bason N."/>
            <person name="Cherevach I."/>
            <person name="Chillingworth T."/>
            <person name="Collins M."/>
            <person name="Cronin A."/>
            <person name="Davis P."/>
            <person name="Doggett J."/>
            <person name="Feltwell T."/>
            <person name="Goble A."/>
            <person name="Hamlin N."/>
            <person name="Hauser H."/>
            <person name="Holroyd S."/>
            <person name="Jagels K."/>
            <person name="Leather S."/>
            <person name="Moule S."/>
            <person name="Norberczak H."/>
            <person name="O'Neil S."/>
            <person name="Ormond D."/>
            <person name="Price C."/>
            <person name="Rabbinowitsch E."/>
            <person name="Rutter S."/>
            <person name="Sanders M."/>
            <person name="Saunders D."/>
            <person name="Seeger K."/>
            <person name="Sharp S."/>
            <person name="Simmonds M."/>
            <person name="Skelton J."/>
            <person name="Squares R."/>
            <person name="Squares S."/>
            <person name="Stevens K."/>
            <person name="Unwin L."/>
            <person name="Whitehead S."/>
            <person name="Barrell B.G."/>
            <person name="Maskell D.J."/>
        </authorList>
    </citation>
    <scope>NUCLEOTIDE SEQUENCE [LARGE SCALE GENOMIC DNA]</scope>
    <source>
        <strain>Tohama I / ATCC BAA-589 / NCTC 13251</strain>
    </source>
</reference>
<dbReference type="EC" id="2.7.2.11" evidence="1"/>
<dbReference type="EMBL" id="BX640413">
    <property type="protein sequence ID" value="CAE41052.1"/>
    <property type="status" value="ALT_INIT"/>
    <property type="molecule type" value="Genomic_DNA"/>
</dbReference>
<dbReference type="RefSeq" id="NP_879566.2">
    <property type="nucleotide sequence ID" value="NC_002929.2"/>
</dbReference>
<dbReference type="RefSeq" id="WP_003807457.1">
    <property type="nucleotide sequence ID" value="NZ_CP039022.1"/>
</dbReference>
<dbReference type="SMR" id="Q7VZX7"/>
<dbReference type="STRING" id="257313.BP0746"/>
<dbReference type="PaxDb" id="257313-BP0746"/>
<dbReference type="GeneID" id="69600699"/>
<dbReference type="KEGG" id="bpe:BP0746"/>
<dbReference type="PATRIC" id="fig|257313.5.peg.798"/>
<dbReference type="eggNOG" id="COG0263">
    <property type="taxonomic scope" value="Bacteria"/>
</dbReference>
<dbReference type="HOGENOM" id="CLU_025400_2_0_4"/>
<dbReference type="UniPathway" id="UPA00098">
    <property type="reaction ID" value="UER00359"/>
</dbReference>
<dbReference type="Proteomes" id="UP000002676">
    <property type="component" value="Chromosome"/>
</dbReference>
<dbReference type="GO" id="GO:0005829">
    <property type="term" value="C:cytosol"/>
    <property type="evidence" value="ECO:0007669"/>
    <property type="project" value="TreeGrafter"/>
</dbReference>
<dbReference type="GO" id="GO:0005524">
    <property type="term" value="F:ATP binding"/>
    <property type="evidence" value="ECO:0007669"/>
    <property type="project" value="UniProtKB-KW"/>
</dbReference>
<dbReference type="GO" id="GO:0004349">
    <property type="term" value="F:glutamate 5-kinase activity"/>
    <property type="evidence" value="ECO:0007669"/>
    <property type="project" value="UniProtKB-UniRule"/>
</dbReference>
<dbReference type="GO" id="GO:0003723">
    <property type="term" value="F:RNA binding"/>
    <property type="evidence" value="ECO:0007669"/>
    <property type="project" value="InterPro"/>
</dbReference>
<dbReference type="GO" id="GO:0055129">
    <property type="term" value="P:L-proline biosynthetic process"/>
    <property type="evidence" value="ECO:0007669"/>
    <property type="project" value="UniProtKB-UniRule"/>
</dbReference>
<dbReference type="CDD" id="cd04242">
    <property type="entry name" value="AAK_G5K_ProB"/>
    <property type="match status" value="1"/>
</dbReference>
<dbReference type="CDD" id="cd21157">
    <property type="entry name" value="PUA_G5K"/>
    <property type="match status" value="1"/>
</dbReference>
<dbReference type="FunFam" id="2.30.130.10:FF:000007">
    <property type="entry name" value="Glutamate 5-kinase"/>
    <property type="match status" value="1"/>
</dbReference>
<dbReference type="FunFam" id="3.40.1160.10:FF:000018">
    <property type="entry name" value="Glutamate 5-kinase"/>
    <property type="match status" value="1"/>
</dbReference>
<dbReference type="Gene3D" id="3.40.1160.10">
    <property type="entry name" value="Acetylglutamate kinase-like"/>
    <property type="match status" value="1"/>
</dbReference>
<dbReference type="Gene3D" id="2.30.130.10">
    <property type="entry name" value="PUA domain"/>
    <property type="match status" value="1"/>
</dbReference>
<dbReference type="HAMAP" id="MF_00456">
    <property type="entry name" value="ProB"/>
    <property type="match status" value="1"/>
</dbReference>
<dbReference type="InterPro" id="IPR036393">
    <property type="entry name" value="AceGlu_kinase-like_sf"/>
</dbReference>
<dbReference type="InterPro" id="IPR001048">
    <property type="entry name" value="Asp/Glu/Uridylate_kinase"/>
</dbReference>
<dbReference type="InterPro" id="IPR041739">
    <property type="entry name" value="G5K_ProB"/>
</dbReference>
<dbReference type="InterPro" id="IPR001057">
    <property type="entry name" value="Glu/AcGlu_kinase"/>
</dbReference>
<dbReference type="InterPro" id="IPR011529">
    <property type="entry name" value="Glu_5kinase"/>
</dbReference>
<dbReference type="InterPro" id="IPR005715">
    <property type="entry name" value="Glu_5kinase/COase_Synthase"/>
</dbReference>
<dbReference type="InterPro" id="IPR019797">
    <property type="entry name" value="Glutamate_5-kinase_CS"/>
</dbReference>
<dbReference type="InterPro" id="IPR002478">
    <property type="entry name" value="PUA"/>
</dbReference>
<dbReference type="InterPro" id="IPR015947">
    <property type="entry name" value="PUA-like_sf"/>
</dbReference>
<dbReference type="InterPro" id="IPR036974">
    <property type="entry name" value="PUA_sf"/>
</dbReference>
<dbReference type="NCBIfam" id="TIGR01027">
    <property type="entry name" value="proB"/>
    <property type="match status" value="1"/>
</dbReference>
<dbReference type="PANTHER" id="PTHR43654">
    <property type="entry name" value="GLUTAMATE 5-KINASE"/>
    <property type="match status" value="1"/>
</dbReference>
<dbReference type="PANTHER" id="PTHR43654:SF1">
    <property type="entry name" value="ISOPENTENYL PHOSPHATE KINASE"/>
    <property type="match status" value="1"/>
</dbReference>
<dbReference type="Pfam" id="PF00696">
    <property type="entry name" value="AA_kinase"/>
    <property type="match status" value="1"/>
</dbReference>
<dbReference type="Pfam" id="PF01472">
    <property type="entry name" value="PUA"/>
    <property type="match status" value="1"/>
</dbReference>
<dbReference type="PIRSF" id="PIRSF000729">
    <property type="entry name" value="GK"/>
    <property type="match status" value="1"/>
</dbReference>
<dbReference type="PRINTS" id="PR00474">
    <property type="entry name" value="GLU5KINASE"/>
</dbReference>
<dbReference type="SMART" id="SM00359">
    <property type="entry name" value="PUA"/>
    <property type="match status" value="1"/>
</dbReference>
<dbReference type="SUPFAM" id="SSF53633">
    <property type="entry name" value="Carbamate kinase-like"/>
    <property type="match status" value="1"/>
</dbReference>
<dbReference type="SUPFAM" id="SSF88697">
    <property type="entry name" value="PUA domain-like"/>
    <property type="match status" value="1"/>
</dbReference>
<dbReference type="PROSITE" id="PS00902">
    <property type="entry name" value="GLUTAMATE_5_KINASE"/>
    <property type="match status" value="1"/>
</dbReference>
<dbReference type="PROSITE" id="PS50890">
    <property type="entry name" value="PUA"/>
    <property type="match status" value="1"/>
</dbReference>
<accession>Q7VZX7</accession>